<comment type="function">
    <text evidence="1">Specifically methylates the guanine in position 2445 (m2G2445) and the guanine in position 2069 (m7G2069) of 23S rRNA.</text>
</comment>
<comment type="catalytic activity">
    <reaction evidence="1">
        <text>guanosine(2445) in 23S rRNA + S-adenosyl-L-methionine = N(2)-methylguanosine(2445) in 23S rRNA + S-adenosyl-L-homocysteine + H(+)</text>
        <dbReference type="Rhea" id="RHEA:42740"/>
        <dbReference type="Rhea" id="RHEA-COMP:10215"/>
        <dbReference type="Rhea" id="RHEA-COMP:10216"/>
        <dbReference type="ChEBI" id="CHEBI:15378"/>
        <dbReference type="ChEBI" id="CHEBI:57856"/>
        <dbReference type="ChEBI" id="CHEBI:59789"/>
        <dbReference type="ChEBI" id="CHEBI:74269"/>
        <dbReference type="ChEBI" id="CHEBI:74481"/>
        <dbReference type="EC" id="2.1.1.173"/>
    </reaction>
</comment>
<comment type="catalytic activity">
    <reaction evidence="1">
        <text>guanosine(2069) in 23S rRNA + S-adenosyl-L-methionine = N(2)-methylguanosine(2069) in 23S rRNA + S-adenosyl-L-homocysteine + H(+)</text>
        <dbReference type="Rhea" id="RHEA:43772"/>
        <dbReference type="Rhea" id="RHEA-COMP:10688"/>
        <dbReference type="Rhea" id="RHEA-COMP:10689"/>
        <dbReference type="ChEBI" id="CHEBI:15378"/>
        <dbReference type="ChEBI" id="CHEBI:57856"/>
        <dbReference type="ChEBI" id="CHEBI:59789"/>
        <dbReference type="ChEBI" id="CHEBI:74269"/>
        <dbReference type="ChEBI" id="CHEBI:74481"/>
        <dbReference type="EC" id="2.1.1.264"/>
    </reaction>
</comment>
<comment type="subcellular location">
    <subcellularLocation>
        <location evidence="1">Cytoplasm</location>
    </subcellularLocation>
</comment>
<comment type="similarity">
    <text evidence="1">Belongs to the methyltransferase superfamily. RlmKL family.</text>
</comment>
<reference key="1">
    <citation type="submission" date="2008-02" db="EMBL/GenBank/DDBJ databases">
        <title>Complete sequence of Yersinia pseudotuberculosis YPIII.</title>
        <authorList>
            <consortium name="US DOE Joint Genome Institute"/>
            <person name="Copeland A."/>
            <person name="Lucas S."/>
            <person name="Lapidus A."/>
            <person name="Glavina del Rio T."/>
            <person name="Dalin E."/>
            <person name="Tice H."/>
            <person name="Bruce D."/>
            <person name="Goodwin L."/>
            <person name="Pitluck S."/>
            <person name="Munk A.C."/>
            <person name="Brettin T."/>
            <person name="Detter J.C."/>
            <person name="Han C."/>
            <person name="Tapia R."/>
            <person name="Schmutz J."/>
            <person name="Larimer F."/>
            <person name="Land M."/>
            <person name="Hauser L."/>
            <person name="Challacombe J.F."/>
            <person name="Green L."/>
            <person name="Lindler L.E."/>
            <person name="Nikolich M.P."/>
            <person name="Richardson P."/>
        </authorList>
    </citation>
    <scope>NUCLEOTIDE SEQUENCE [LARGE SCALE GENOMIC DNA]</scope>
    <source>
        <strain>YPIII</strain>
    </source>
</reference>
<feature type="chain" id="PRO_0000366874" description="Ribosomal RNA large subunit methyltransferase K/L">
    <location>
        <begin position="1"/>
        <end position="706"/>
    </location>
</feature>
<feature type="domain" description="THUMP" evidence="1">
    <location>
        <begin position="43"/>
        <end position="154"/>
    </location>
</feature>
<dbReference type="EC" id="2.1.1.173" evidence="1"/>
<dbReference type="EC" id="2.1.1.264" evidence="1"/>
<dbReference type="EMBL" id="CP000950">
    <property type="protein sequence ID" value="ACA68918.1"/>
    <property type="molecule type" value="Genomic_DNA"/>
</dbReference>
<dbReference type="SMR" id="B1JQR7"/>
<dbReference type="KEGG" id="ypy:YPK_2641"/>
<dbReference type="PATRIC" id="fig|502800.11.peg.3340"/>
<dbReference type="GO" id="GO:0005737">
    <property type="term" value="C:cytoplasm"/>
    <property type="evidence" value="ECO:0007669"/>
    <property type="project" value="UniProtKB-SubCell"/>
</dbReference>
<dbReference type="GO" id="GO:0052915">
    <property type="term" value="F:23S rRNA (guanine(2445)-N(2))-methyltransferase activity"/>
    <property type="evidence" value="ECO:0007669"/>
    <property type="project" value="UniProtKB-UniRule"/>
</dbReference>
<dbReference type="GO" id="GO:0003723">
    <property type="term" value="F:RNA binding"/>
    <property type="evidence" value="ECO:0007669"/>
    <property type="project" value="UniProtKB-KW"/>
</dbReference>
<dbReference type="GO" id="GO:0070043">
    <property type="term" value="F:rRNA (guanine-N7-)-methyltransferase activity"/>
    <property type="evidence" value="ECO:0007669"/>
    <property type="project" value="UniProtKB-UniRule"/>
</dbReference>
<dbReference type="CDD" id="cd02440">
    <property type="entry name" value="AdoMet_MTases"/>
    <property type="match status" value="2"/>
</dbReference>
<dbReference type="CDD" id="cd11715">
    <property type="entry name" value="THUMP_AdoMetMT"/>
    <property type="match status" value="1"/>
</dbReference>
<dbReference type="FunFam" id="3.30.750.80:FF:000001">
    <property type="entry name" value="Ribosomal RNA large subunit methyltransferase K/L"/>
    <property type="match status" value="1"/>
</dbReference>
<dbReference type="FunFam" id="3.40.50.150:FF:000039">
    <property type="entry name" value="Ribosomal RNA large subunit methyltransferase K/L"/>
    <property type="match status" value="1"/>
</dbReference>
<dbReference type="Gene3D" id="3.30.2130.30">
    <property type="match status" value="1"/>
</dbReference>
<dbReference type="Gene3D" id="3.30.750.80">
    <property type="entry name" value="RNA methyltransferase domain (HRMD) like"/>
    <property type="match status" value="1"/>
</dbReference>
<dbReference type="Gene3D" id="3.40.50.150">
    <property type="entry name" value="Vaccinia Virus protein VP39"/>
    <property type="match status" value="2"/>
</dbReference>
<dbReference type="HAMAP" id="MF_01858">
    <property type="entry name" value="23SrRNA_methyltr_KL"/>
    <property type="match status" value="1"/>
</dbReference>
<dbReference type="InterPro" id="IPR017244">
    <property type="entry name" value="23SrRNA_methyltr_KL"/>
</dbReference>
<dbReference type="InterPro" id="IPR002052">
    <property type="entry name" value="DNA_methylase_N6_adenine_CS"/>
</dbReference>
<dbReference type="InterPro" id="IPR000241">
    <property type="entry name" value="RlmKL-like_Mtase"/>
</dbReference>
<dbReference type="InterPro" id="IPR053943">
    <property type="entry name" value="RlmKL-like_Mtase_CS"/>
</dbReference>
<dbReference type="InterPro" id="IPR054170">
    <property type="entry name" value="RlmL_1st"/>
</dbReference>
<dbReference type="InterPro" id="IPR019614">
    <property type="entry name" value="SAM-dep_methyl-trfase"/>
</dbReference>
<dbReference type="InterPro" id="IPR029063">
    <property type="entry name" value="SAM-dependent_MTases_sf"/>
</dbReference>
<dbReference type="InterPro" id="IPR004114">
    <property type="entry name" value="THUMP_dom"/>
</dbReference>
<dbReference type="NCBIfam" id="NF008748">
    <property type="entry name" value="PRK11783.1"/>
    <property type="match status" value="1"/>
</dbReference>
<dbReference type="PANTHER" id="PTHR47313">
    <property type="entry name" value="RIBOSOMAL RNA LARGE SUBUNIT METHYLTRANSFERASE K/L"/>
    <property type="match status" value="1"/>
</dbReference>
<dbReference type="PANTHER" id="PTHR47313:SF1">
    <property type="entry name" value="RIBOSOMAL RNA LARGE SUBUNIT METHYLTRANSFERASE K_L"/>
    <property type="match status" value="1"/>
</dbReference>
<dbReference type="Pfam" id="PF10672">
    <property type="entry name" value="Methyltrans_SAM"/>
    <property type="match status" value="1"/>
</dbReference>
<dbReference type="Pfam" id="PF22020">
    <property type="entry name" value="RlmL_1st"/>
    <property type="match status" value="1"/>
</dbReference>
<dbReference type="Pfam" id="PF02926">
    <property type="entry name" value="THUMP"/>
    <property type="match status" value="1"/>
</dbReference>
<dbReference type="Pfam" id="PF01170">
    <property type="entry name" value="UPF0020"/>
    <property type="match status" value="1"/>
</dbReference>
<dbReference type="PIRSF" id="PIRSF037618">
    <property type="entry name" value="RNA_Mtase_bacteria_prd"/>
    <property type="match status" value="1"/>
</dbReference>
<dbReference type="SMART" id="SM00981">
    <property type="entry name" value="THUMP"/>
    <property type="match status" value="1"/>
</dbReference>
<dbReference type="SUPFAM" id="SSF53335">
    <property type="entry name" value="S-adenosyl-L-methionine-dependent methyltransferases"/>
    <property type="match status" value="2"/>
</dbReference>
<dbReference type="PROSITE" id="PS51165">
    <property type="entry name" value="THUMP"/>
    <property type="match status" value="1"/>
</dbReference>
<dbReference type="PROSITE" id="PS01261">
    <property type="entry name" value="UPF0020"/>
    <property type="match status" value="1"/>
</dbReference>
<name>RLMKL_YERPY</name>
<sequence>MNSLFASTARGLEELLKSELEALGAHDCKIVQGGVHFQGDDRLMYQSLLWSRLASRILLPLNEFKVYSDLDLYLGVQAIDWPSIFGVDKTFAVHFSGVNDEIRNSQYGALKVKDAIVDSFTRKMDQRPTVAKQQPDIRVNVFLQRDMASVALDLSGEGLHQRGYRDLTGQAPLKENLAAAIIQRSGWQPGTPMVDPMCGSGTLLIEAAMMASDRAPGLHRGHWGFTAWNAFNEALWRELTTEAQVRARRGLLETSSRFFGSDIDRRVIEMARANARRAGVAELITFNANDISKLVNPLPEGPVGTVISNPPYGERLESEPALIALHNMFGRMMKTAFGGWRLSLFSASPELLSCLQLRADREFKAKNGPLDCVQKNYQLTANPLGAGGALVAEDYANRLRKNVKKLDKWAKQQGIECYRLYDADLPDYNVAVDRYGSKVVVQEYAPPKTIDPQKARQRLFDVINATLAVLELPSNQLVLKTRERQKGKNQYEKLAQKGEFLLVSEYNAKLWVNLTDYLDTGLFLDHRIARQMLGKMSQGKDFLNLFAYTGTASVHAGLGGARSTTTVDMSRTYLEWAEKNLRVNGLTGQQHRLIQADCLSWLSNTDEQFDVIFIDPPTFSNSKRMETTFDVQRDHLVLMKELKRLLRRKGTIMFSNNKRGFQMDLAGIAALGLEAKEITALTQSEDFARNRQIHNCWLVTHSQEEK</sequence>
<protein>
    <recommendedName>
        <fullName evidence="1">Ribosomal RNA large subunit methyltransferase K/L</fullName>
    </recommendedName>
    <domain>
        <recommendedName>
            <fullName evidence="1">23S rRNA m2G2445 methyltransferase</fullName>
            <ecNumber evidence="1">2.1.1.173</ecNumber>
        </recommendedName>
        <alternativeName>
            <fullName evidence="1">rRNA (guanine-N(2)-)-methyltransferase RlmL</fullName>
        </alternativeName>
    </domain>
    <domain>
        <recommendedName>
            <fullName evidence="1">23S rRNA m7G2069 methyltransferase</fullName>
            <ecNumber evidence="1">2.1.1.264</ecNumber>
        </recommendedName>
        <alternativeName>
            <fullName evidence="1">rRNA (guanine-N(7)-)-methyltransferase RlmK</fullName>
        </alternativeName>
    </domain>
</protein>
<accession>B1JQR7</accession>
<keyword id="KW-0963">Cytoplasm</keyword>
<keyword id="KW-0489">Methyltransferase</keyword>
<keyword id="KW-0694">RNA-binding</keyword>
<keyword id="KW-0698">rRNA processing</keyword>
<keyword id="KW-0949">S-adenosyl-L-methionine</keyword>
<keyword id="KW-0808">Transferase</keyword>
<gene>
    <name evidence="1" type="primary">rlmL</name>
    <name type="ordered locus">YPK_2641</name>
</gene>
<evidence type="ECO:0000255" key="1">
    <source>
        <dbReference type="HAMAP-Rule" id="MF_01858"/>
    </source>
</evidence>
<organism>
    <name type="scientific">Yersinia pseudotuberculosis serotype O:3 (strain YPIII)</name>
    <dbReference type="NCBI Taxonomy" id="502800"/>
    <lineage>
        <taxon>Bacteria</taxon>
        <taxon>Pseudomonadati</taxon>
        <taxon>Pseudomonadota</taxon>
        <taxon>Gammaproteobacteria</taxon>
        <taxon>Enterobacterales</taxon>
        <taxon>Yersiniaceae</taxon>
        <taxon>Yersinia</taxon>
    </lineage>
</organism>
<proteinExistence type="inferred from homology"/>